<feature type="chain" id="PRO_0000125724" description="Large ribosomal subunit protein uL1">
    <location>
        <begin position="1"/>
        <end position="237"/>
    </location>
</feature>
<reference key="1">
    <citation type="journal article" date="2004" name="J. Bacteriol.">
        <title>Complete genome sequence of Rickettsia typhi and comparison with sequences of other Rickettsiae.</title>
        <authorList>
            <person name="McLeod M.P."/>
            <person name="Qin X."/>
            <person name="Karpathy S.E."/>
            <person name="Gioia J."/>
            <person name="Highlander S.K."/>
            <person name="Fox G.E."/>
            <person name="McNeill T.Z."/>
            <person name="Jiang H."/>
            <person name="Muzny D."/>
            <person name="Jacob L.S."/>
            <person name="Hawes A.C."/>
            <person name="Sodergren E."/>
            <person name="Gill R."/>
            <person name="Hume J."/>
            <person name="Morgan M."/>
            <person name="Fan G."/>
            <person name="Amin A.G."/>
            <person name="Gibbs R.A."/>
            <person name="Hong C."/>
            <person name="Yu X.-J."/>
            <person name="Walker D.H."/>
            <person name="Weinstock G.M."/>
        </authorList>
    </citation>
    <scope>NUCLEOTIDE SEQUENCE [LARGE SCALE GENOMIC DNA]</scope>
    <source>
        <strain>ATCC VR-144 / Wilmington</strain>
    </source>
</reference>
<protein>
    <recommendedName>
        <fullName evidence="1">Large ribosomal subunit protein uL1</fullName>
    </recommendedName>
    <alternativeName>
        <fullName evidence="2">50S ribosomal protein L1</fullName>
    </alternativeName>
</protein>
<name>RL1_RICTY</name>
<comment type="function">
    <text evidence="1">Binds directly to 23S rRNA. The L1 stalk is quite mobile in the ribosome, and is involved in E site tRNA release.</text>
</comment>
<comment type="function">
    <text evidence="1">Protein L1 is also a translational repressor protein, it controls the translation of the L11 operon by binding to its mRNA.</text>
</comment>
<comment type="subunit">
    <text evidence="1">Part of the 50S ribosomal subunit.</text>
</comment>
<comment type="similarity">
    <text evidence="1">Belongs to the universal ribosomal protein uL1 family.</text>
</comment>
<dbReference type="EMBL" id="AE017197">
    <property type="protein sequence ID" value="AAU03611.1"/>
    <property type="molecule type" value="Genomic_DNA"/>
</dbReference>
<dbReference type="RefSeq" id="WP_011190598.1">
    <property type="nucleotide sequence ID" value="NC_006142.1"/>
</dbReference>
<dbReference type="SMR" id="Q68XN1"/>
<dbReference type="KEGG" id="rty:RT0126"/>
<dbReference type="eggNOG" id="COG0081">
    <property type="taxonomic scope" value="Bacteria"/>
</dbReference>
<dbReference type="HOGENOM" id="CLU_062853_0_0_5"/>
<dbReference type="OrthoDB" id="9803740at2"/>
<dbReference type="Proteomes" id="UP000000604">
    <property type="component" value="Chromosome"/>
</dbReference>
<dbReference type="GO" id="GO:0015934">
    <property type="term" value="C:large ribosomal subunit"/>
    <property type="evidence" value="ECO:0007669"/>
    <property type="project" value="InterPro"/>
</dbReference>
<dbReference type="GO" id="GO:0019843">
    <property type="term" value="F:rRNA binding"/>
    <property type="evidence" value="ECO:0007669"/>
    <property type="project" value="UniProtKB-UniRule"/>
</dbReference>
<dbReference type="GO" id="GO:0003735">
    <property type="term" value="F:structural constituent of ribosome"/>
    <property type="evidence" value="ECO:0007669"/>
    <property type="project" value="InterPro"/>
</dbReference>
<dbReference type="GO" id="GO:0000049">
    <property type="term" value="F:tRNA binding"/>
    <property type="evidence" value="ECO:0007669"/>
    <property type="project" value="UniProtKB-KW"/>
</dbReference>
<dbReference type="GO" id="GO:0006417">
    <property type="term" value="P:regulation of translation"/>
    <property type="evidence" value="ECO:0007669"/>
    <property type="project" value="UniProtKB-KW"/>
</dbReference>
<dbReference type="GO" id="GO:0006412">
    <property type="term" value="P:translation"/>
    <property type="evidence" value="ECO:0007669"/>
    <property type="project" value="UniProtKB-UniRule"/>
</dbReference>
<dbReference type="CDD" id="cd00403">
    <property type="entry name" value="Ribosomal_L1"/>
    <property type="match status" value="1"/>
</dbReference>
<dbReference type="FunFam" id="3.40.50.790:FF:000001">
    <property type="entry name" value="50S ribosomal protein L1"/>
    <property type="match status" value="1"/>
</dbReference>
<dbReference type="Gene3D" id="3.30.190.20">
    <property type="match status" value="1"/>
</dbReference>
<dbReference type="Gene3D" id="3.40.50.790">
    <property type="match status" value="1"/>
</dbReference>
<dbReference type="HAMAP" id="MF_01318_B">
    <property type="entry name" value="Ribosomal_uL1_B"/>
    <property type="match status" value="1"/>
</dbReference>
<dbReference type="InterPro" id="IPR005878">
    <property type="entry name" value="Ribosom_uL1_bac-type"/>
</dbReference>
<dbReference type="InterPro" id="IPR002143">
    <property type="entry name" value="Ribosomal_uL1"/>
</dbReference>
<dbReference type="InterPro" id="IPR023674">
    <property type="entry name" value="Ribosomal_uL1-like"/>
</dbReference>
<dbReference type="InterPro" id="IPR028364">
    <property type="entry name" value="Ribosomal_uL1/biogenesis"/>
</dbReference>
<dbReference type="InterPro" id="IPR016095">
    <property type="entry name" value="Ribosomal_uL1_3-a/b-sand"/>
</dbReference>
<dbReference type="InterPro" id="IPR023673">
    <property type="entry name" value="Ribosomal_uL1_CS"/>
</dbReference>
<dbReference type="NCBIfam" id="TIGR01169">
    <property type="entry name" value="rplA_bact"/>
    <property type="match status" value="1"/>
</dbReference>
<dbReference type="PANTHER" id="PTHR36427">
    <property type="entry name" value="54S RIBOSOMAL PROTEIN L1, MITOCHONDRIAL"/>
    <property type="match status" value="1"/>
</dbReference>
<dbReference type="PANTHER" id="PTHR36427:SF3">
    <property type="entry name" value="LARGE RIBOSOMAL SUBUNIT PROTEIN UL1M"/>
    <property type="match status" value="1"/>
</dbReference>
<dbReference type="Pfam" id="PF00687">
    <property type="entry name" value="Ribosomal_L1"/>
    <property type="match status" value="1"/>
</dbReference>
<dbReference type="PIRSF" id="PIRSF002155">
    <property type="entry name" value="Ribosomal_L1"/>
    <property type="match status" value="1"/>
</dbReference>
<dbReference type="SUPFAM" id="SSF56808">
    <property type="entry name" value="Ribosomal protein L1"/>
    <property type="match status" value="1"/>
</dbReference>
<dbReference type="PROSITE" id="PS01199">
    <property type="entry name" value="RIBOSOMAL_L1"/>
    <property type="match status" value="1"/>
</dbReference>
<evidence type="ECO:0000255" key="1">
    <source>
        <dbReference type="HAMAP-Rule" id="MF_01318"/>
    </source>
</evidence>
<evidence type="ECO:0000305" key="2"/>
<keyword id="KW-0678">Repressor</keyword>
<keyword id="KW-0687">Ribonucleoprotein</keyword>
<keyword id="KW-0689">Ribosomal protein</keyword>
<keyword id="KW-0694">RNA-binding</keyword>
<keyword id="KW-0699">rRNA-binding</keyword>
<keyword id="KW-0810">Translation regulation</keyword>
<keyword id="KW-0820">tRNA-binding</keyword>
<gene>
    <name evidence="1" type="primary">rplA</name>
    <name type="ordered locus">RT0126</name>
</gene>
<organism>
    <name type="scientific">Rickettsia typhi (strain ATCC VR-144 / Wilmington)</name>
    <dbReference type="NCBI Taxonomy" id="257363"/>
    <lineage>
        <taxon>Bacteria</taxon>
        <taxon>Pseudomonadati</taxon>
        <taxon>Pseudomonadota</taxon>
        <taxon>Alphaproteobacteria</taxon>
        <taxon>Rickettsiales</taxon>
        <taxon>Rickettsiaceae</taxon>
        <taxon>Rickettsieae</taxon>
        <taxon>Rickettsia</taxon>
        <taxon>typhus group</taxon>
    </lineage>
</organism>
<proteinExistence type="inferred from homology"/>
<accession>Q68XN1</accession>
<sequence length="237" mass="25504">MSNKDIFVKISGSKKIREAREKVKSDTLYNLTSAVERLKSASYVKFDPTLEIVMKLGIDPRHSDQIVRGVVNLPAGTGKIIRVAVICKEEREEEAKSAGADLVGSINIIDEIKSGQINFDVCIATPDMMSMISSVARILGPKGLMPNPKLGTVTLDIKNAIKNAKSGQVEYRAEKAGIIHAGLGKLSFSDQDLLKNLNAFIGAVIKAKPVGLKGSYLKAIYLSSTMGASVQIDLTSI</sequence>